<comment type="function">
    <text evidence="1 4 5 6">Non-catalytic component of the TSC-TBC complex, a multiprotein complex that acts as a negative regulator of the canonical mTORC1 complex, an evolutionarily conserved central nutrient sensor that stimulates anabolic reactions and macromolecule biosynthesis to promote cellular biomass generation and growth (PubMed:12820960). The TSC-TBC complex acts as a GTPase-activating protein (GAP) for the small GTPase RHEB, a direct activator of the protein kinase activity of mTORC1 (PubMed:12820960). In absence of nutrients, the TSC-TBC complex inhibits mTORC1, thereby preventing phosphorylation of ribosomal protein S6 kinase (RPS6KB1 and RPS6KB2) and EIF4EBP1 (4E-BP1) by the mTORC1 signaling (PubMed:12820960). The TSC-TBC complex is inactivated in response to nutrients, relieving inhibition of mTORC1 (By similarity). Within the TSC-TBC complex, TSC1 stabilizes TSC2 and prevents TSC2 self-aggregation (By similarity). Involved in microtubule-mediated protein transport via its ability to regulate mTORC1 signaling (PubMed:16707451). Also acts as a co-chaperone for HSP90AA1 facilitating HSP90AA1 chaperoning of protein clients such as kinases, TSC2 and glucocorticoid receptor NR3C1 (By similarity). Increases ATP binding to HSP90AA1 and inhibits HSP90AA1 ATPase activity (PubMed:29127155). Competes with the activating co-chaperone AHSA1 for binding to HSP90AA1, thereby providing a reciprocal regulatory mechanism for chaperoning of client proteins (By similarity). Recruits TSC2 to HSP90AA1 and stabilizes TSC2 by preventing the interaction between TSC2 and ubiquitin ligase HERC1 (By similarity).</text>
</comment>
<comment type="subunit">
    <text evidence="1 6">Component of the TSC-TBC complex (also named Rhebulator complex), composed of 2 molecules of TSC1, 2 molecules of TSC2 and 1 molecule of TBC1D7 (By similarity). Probably forms a complex composed of chaperones HSP90 and HSP70, co-chaperones STIP1/HOP, CDC37, PPP5C, PTGES3/p23, TSC1 and client protein TSC2 (By similarity). Forms a complex composed of chaperones HSP90 and HSP70, co-chaperones CDC37, PPP5C, TSC1 and client protein TSC2, CDK4, AKT, RAF1 and NR3C1; this complex does not contain co-chaperones STIP1/HOP and PTGES3/p23 (By similarity). Forms a complex containing HSP90AA1, TSC1 and TSC2; TSC1 is required to recruit TCS2 to the complex (By similarity). Interacts (via C-terminus) with the closed form of HSP90AA1 (via the middle domain and TPR repeat-binding motif) (PubMed:29127155). Interacts with DOCK7 (By similarity). Interacts with FBXW5. Interacts with WDR45B. Interacts with RPAP3 and URI1 (By similarity).</text>
</comment>
<comment type="interaction">
    <interactant intactId="EBI-1202690">
        <id>Q9EP53</id>
    </interactant>
    <interactant intactId="EBI-2314988">
        <id>D3YZU1</id>
        <label>Shank1</label>
    </interactant>
    <organismsDiffer>false</organismsDiffer>
    <experiments>2</experiments>
</comment>
<comment type="interaction">
    <interactant intactId="EBI-1202690">
        <id>Q9EP53</id>
    </interactant>
    <interactant intactId="EBI-7924402">
        <id>Q61037</id>
        <label>Tsc2</label>
    </interactant>
    <organismsDiffer>false</organismsDiffer>
    <experiments>6</experiments>
</comment>
<comment type="subcellular location">
    <subcellularLocation>
        <location evidence="1">Lysosome membrane</location>
        <topology evidence="1">Peripheral membrane protein</topology>
    </subcellularLocation>
    <subcellularLocation>
        <location evidence="1">Cytoplasm</location>
        <location evidence="1">Cytosol</location>
    </subcellularLocation>
    <text evidence="1">Recruited to lysosomal membranes in a RHEB-dependent process in absence of nutrients. In response to nutrients, the complex dissociates from lysosomal membranes and relocalizes to the cytosol.</text>
</comment>
<comment type="alternative products">
    <event type="alternative splicing"/>
    <isoform>
        <id>Q9EP53-1</id>
        <name>1</name>
        <sequence type="displayed"/>
    </isoform>
    <isoform>
        <id>Q9EP53-2</id>
        <name>2</name>
        <sequence type="described" ref="VSP_037747"/>
    </isoform>
    <isoform>
        <id>Q9EP53-3</id>
        <name>3</name>
        <sequence type="described" ref="VSP_037747 VSP_037748"/>
    </isoform>
    <isoform>
        <id>Q9EP53-4</id>
        <name>4</name>
        <sequence type="described" ref="VSP_037747 VSP_037749"/>
    </isoform>
</comment>
<comment type="domain">
    <text evidence="1">The C-terminal putative coiled-coil domain is necessary for interaction with TSC2.</text>
</comment>
<comment type="PTM">
    <text evidence="1">Phosphorylation at Ser-502 does not affect interaction with TSC2.</text>
</comment>
<comment type="PTM">
    <text evidence="1">'Lys-63'-linked ubiquitinated at Lys-30 by PELI1; the ubiquitination promotes TSC1/TSC2 complex stability.</text>
</comment>
<comment type="disruption phenotype">
    <text evidence="6">Conditional knockout in glia causes an increase in HSP90AA1 ATPase activity and a down-regulation of ULK1, ERBB2, ESR1 and NR3C1 protein levels in the brain.</text>
</comment>
<organism>
    <name type="scientific">Mus musculus</name>
    <name type="common">Mouse</name>
    <dbReference type="NCBI Taxonomy" id="10090"/>
    <lineage>
        <taxon>Eukaryota</taxon>
        <taxon>Metazoa</taxon>
        <taxon>Chordata</taxon>
        <taxon>Craniata</taxon>
        <taxon>Vertebrata</taxon>
        <taxon>Euteleostomi</taxon>
        <taxon>Mammalia</taxon>
        <taxon>Eutheria</taxon>
        <taxon>Euarchontoglires</taxon>
        <taxon>Glires</taxon>
        <taxon>Rodentia</taxon>
        <taxon>Myomorpha</taxon>
        <taxon>Muroidea</taxon>
        <taxon>Muridae</taxon>
        <taxon>Murinae</taxon>
        <taxon>Mus</taxon>
        <taxon>Mus</taxon>
    </lineage>
</organism>
<dbReference type="EMBL" id="AJ271911">
    <property type="protein sequence ID" value="CAC20676.1"/>
    <property type="molecule type" value="Genomic_DNA"/>
</dbReference>
<dbReference type="EMBL" id="AJ271912">
    <property type="protein sequence ID" value="CAC20677.1"/>
    <property type="molecule type" value="mRNA"/>
</dbReference>
<dbReference type="EMBL" id="AK147428">
    <property type="protein sequence ID" value="BAE27905.1"/>
    <property type="molecule type" value="mRNA"/>
</dbReference>
<dbReference type="EMBL" id="AB047561">
    <property type="protein sequence ID" value="BAB60810.1"/>
    <property type="molecule type" value="mRNA"/>
</dbReference>
<dbReference type="EMBL" id="AL731851">
    <property type="status" value="NOT_ANNOTATED_CDS"/>
    <property type="molecule type" value="Genomic_DNA"/>
</dbReference>
<dbReference type="EMBL" id="CH466542">
    <property type="protein sequence ID" value="EDL08392.1"/>
    <property type="molecule type" value="Genomic_DNA"/>
</dbReference>
<dbReference type="EMBL" id="BC052399">
    <property type="protein sequence ID" value="AAH52399.1"/>
    <property type="molecule type" value="mRNA"/>
</dbReference>
<dbReference type="EMBL" id="AK122229">
    <property type="protein sequence ID" value="BAC65511.1"/>
    <property type="molecule type" value="mRNA"/>
</dbReference>
<dbReference type="CCDS" id="CCDS15844.1">
    <molecule id="Q9EP53-2"/>
</dbReference>
<dbReference type="CCDS" id="CCDS71013.1">
    <molecule id="Q9EP53-3"/>
</dbReference>
<dbReference type="CCDS" id="CCDS79762.1">
    <molecule id="Q9EP53-1"/>
</dbReference>
<dbReference type="RefSeq" id="NP_001276504.1">
    <molecule id="Q9EP53-1"/>
    <property type="nucleotide sequence ID" value="NM_001289575.2"/>
</dbReference>
<dbReference type="RefSeq" id="NP_001276505.1">
    <molecule id="Q9EP53-3"/>
    <property type="nucleotide sequence ID" value="NM_001289576.2"/>
</dbReference>
<dbReference type="RefSeq" id="NP_001408544.1">
    <molecule id="Q9EP53-2"/>
    <property type="nucleotide sequence ID" value="NM_001421615.1"/>
</dbReference>
<dbReference type="RefSeq" id="NP_001408545.1">
    <molecule id="Q9EP53-3"/>
    <property type="nucleotide sequence ID" value="NM_001421616.1"/>
</dbReference>
<dbReference type="RefSeq" id="NP_075025.2">
    <molecule id="Q9EP53-2"/>
    <property type="nucleotide sequence ID" value="NM_022887.5"/>
</dbReference>
<dbReference type="RefSeq" id="XP_011237446.1">
    <property type="nucleotide sequence ID" value="XM_011239144.1"/>
</dbReference>
<dbReference type="RefSeq" id="XP_030107795.1">
    <molecule id="Q9EP53-2"/>
    <property type="nucleotide sequence ID" value="XM_030251935.1"/>
</dbReference>
<dbReference type="RefSeq" id="XP_030107796.1">
    <molecule id="Q9EP53-2"/>
    <property type="nucleotide sequence ID" value="XM_030251936.2"/>
</dbReference>
<dbReference type="SMR" id="Q9EP53"/>
<dbReference type="BioGRID" id="211115">
    <property type="interactions" value="135"/>
</dbReference>
<dbReference type="FunCoup" id="Q9EP53">
    <property type="interactions" value="3678"/>
</dbReference>
<dbReference type="IntAct" id="Q9EP53">
    <property type="interactions" value="122"/>
</dbReference>
<dbReference type="MINT" id="Q9EP53"/>
<dbReference type="STRING" id="10090.ENSMUSP00000109500"/>
<dbReference type="GlyGen" id="Q9EP53">
    <property type="glycosylation" value="3 sites, 1 O-linked glycan (1 site)"/>
</dbReference>
<dbReference type="iPTMnet" id="Q9EP53"/>
<dbReference type="PhosphoSitePlus" id="Q9EP53"/>
<dbReference type="SwissPalm" id="Q9EP53"/>
<dbReference type="jPOST" id="Q9EP53"/>
<dbReference type="PaxDb" id="10090-ENSMUSP00000109500"/>
<dbReference type="PeptideAtlas" id="Q9EP53"/>
<dbReference type="ProteomicsDB" id="300032">
    <molecule id="Q9EP53-1"/>
</dbReference>
<dbReference type="ProteomicsDB" id="300033">
    <molecule id="Q9EP53-2"/>
</dbReference>
<dbReference type="ProteomicsDB" id="300034">
    <molecule id="Q9EP53-3"/>
</dbReference>
<dbReference type="ProteomicsDB" id="300035">
    <molecule id="Q9EP53-4"/>
</dbReference>
<dbReference type="Pumba" id="Q9EP53"/>
<dbReference type="Antibodypedia" id="3164">
    <property type="antibodies" value="1846 antibodies from 45 providers"/>
</dbReference>
<dbReference type="DNASU" id="64930"/>
<dbReference type="Ensembl" id="ENSMUST00000028155.12">
    <molecule id="Q9EP53-2"/>
    <property type="protein sequence ID" value="ENSMUSP00000028155.6"/>
    <property type="gene ID" value="ENSMUSG00000026812.17"/>
</dbReference>
<dbReference type="Ensembl" id="ENSMUST00000113867.9">
    <molecule id="Q9EP53-3"/>
    <property type="protein sequence ID" value="ENSMUSP00000109498.3"/>
    <property type="gene ID" value="ENSMUSG00000026812.17"/>
</dbReference>
<dbReference type="Ensembl" id="ENSMUST00000113869.8">
    <molecule id="Q9EP53-1"/>
    <property type="protein sequence ID" value="ENSMUSP00000109500.2"/>
    <property type="gene ID" value="ENSMUSG00000026812.17"/>
</dbReference>
<dbReference type="Ensembl" id="ENSMUST00000113870.3">
    <molecule id="Q9EP53-2"/>
    <property type="protein sequence ID" value="ENSMUSP00000109501.3"/>
    <property type="gene ID" value="ENSMUSG00000026812.17"/>
</dbReference>
<dbReference type="GeneID" id="64930"/>
<dbReference type="KEGG" id="mmu:64930"/>
<dbReference type="UCSC" id="uc008iyw.2">
    <molecule id="Q9EP53-1"/>
    <property type="organism name" value="mouse"/>
</dbReference>
<dbReference type="UCSC" id="uc008iyx.2">
    <molecule id="Q9EP53-3"/>
    <property type="organism name" value="mouse"/>
</dbReference>
<dbReference type="UCSC" id="uc008iyz.2">
    <molecule id="Q9EP53-2"/>
    <property type="organism name" value="mouse"/>
</dbReference>
<dbReference type="AGR" id="MGI:1929183"/>
<dbReference type="CTD" id="7248"/>
<dbReference type="MGI" id="MGI:1929183">
    <property type="gene designation" value="Tsc1"/>
</dbReference>
<dbReference type="VEuPathDB" id="HostDB:ENSMUSG00000026812"/>
<dbReference type="eggNOG" id="ENOG502QQPT">
    <property type="taxonomic scope" value="Eukaryota"/>
</dbReference>
<dbReference type="GeneTree" id="ENSGT00390000014148"/>
<dbReference type="HOGENOM" id="CLU_011546_0_0_1"/>
<dbReference type="InParanoid" id="Q9EP53"/>
<dbReference type="OMA" id="NRMASYS"/>
<dbReference type="OrthoDB" id="6022054at2759"/>
<dbReference type="PhylomeDB" id="Q9EP53"/>
<dbReference type="TreeFam" id="TF325466"/>
<dbReference type="Reactome" id="R-MMU-1632852">
    <property type="pathway name" value="Macroautophagy"/>
</dbReference>
<dbReference type="Reactome" id="R-MMU-165181">
    <property type="pathway name" value="Inhibition of TSC complex formation by PKB"/>
</dbReference>
<dbReference type="Reactome" id="R-MMU-380972">
    <property type="pathway name" value="Energy dependent regulation of mTOR by LKB1-AMPK"/>
</dbReference>
<dbReference type="Reactome" id="R-MMU-5628897">
    <property type="pathway name" value="TP53 Regulates Metabolic Genes"/>
</dbReference>
<dbReference type="Reactome" id="R-MMU-8854214">
    <property type="pathway name" value="TBC/RABGAPs"/>
</dbReference>
<dbReference type="BioGRID-ORCS" id="64930">
    <property type="hits" value="21 hits in 87 CRISPR screens"/>
</dbReference>
<dbReference type="ChiTaRS" id="Tsc1">
    <property type="organism name" value="mouse"/>
</dbReference>
<dbReference type="PRO" id="PR:Q9EP53"/>
<dbReference type="Proteomes" id="UP000000589">
    <property type="component" value="Chromosome 2"/>
</dbReference>
<dbReference type="RNAct" id="Q9EP53">
    <property type="molecule type" value="protein"/>
</dbReference>
<dbReference type="Bgee" id="ENSMUSG00000026812">
    <property type="expression patterns" value="Expressed in ventromedial nucleus of hypothalamus and 267 other cell types or tissues"/>
</dbReference>
<dbReference type="ExpressionAtlas" id="Q9EP53">
    <property type="expression patterns" value="baseline and differential"/>
</dbReference>
<dbReference type="GO" id="GO:0005884">
    <property type="term" value="C:actin filament"/>
    <property type="evidence" value="ECO:0007669"/>
    <property type="project" value="Ensembl"/>
</dbReference>
<dbReference type="GO" id="GO:0005938">
    <property type="term" value="C:cell cortex"/>
    <property type="evidence" value="ECO:0007669"/>
    <property type="project" value="Ensembl"/>
</dbReference>
<dbReference type="GO" id="GO:0036064">
    <property type="term" value="C:ciliary basal body"/>
    <property type="evidence" value="ECO:0007669"/>
    <property type="project" value="Ensembl"/>
</dbReference>
<dbReference type="GO" id="GO:0005737">
    <property type="term" value="C:cytoplasm"/>
    <property type="evidence" value="ECO:0000314"/>
    <property type="project" value="MGI"/>
</dbReference>
<dbReference type="GO" id="GO:0005829">
    <property type="term" value="C:cytosol"/>
    <property type="evidence" value="ECO:0000250"/>
    <property type="project" value="UniProtKB"/>
</dbReference>
<dbReference type="GO" id="GO:0030027">
    <property type="term" value="C:lamellipodium"/>
    <property type="evidence" value="ECO:0007669"/>
    <property type="project" value="Ensembl"/>
</dbReference>
<dbReference type="GO" id="GO:0005811">
    <property type="term" value="C:lipid droplet"/>
    <property type="evidence" value="ECO:0007669"/>
    <property type="project" value="Ensembl"/>
</dbReference>
<dbReference type="GO" id="GO:0005765">
    <property type="term" value="C:lysosomal membrane"/>
    <property type="evidence" value="ECO:0000250"/>
    <property type="project" value="UniProtKB"/>
</dbReference>
<dbReference type="GO" id="GO:0005634">
    <property type="term" value="C:nucleus"/>
    <property type="evidence" value="ECO:0000250"/>
    <property type="project" value="ParkinsonsUK-UCL"/>
</dbReference>
<dbReference type="GO" id="GO:0048471">
    <property type="term" value="C:perinuclear region of cytoplasm"/>
    <property type="evidence" value="ECO:0000250"/>
    <property type="project" value="ParkinsonsUK-UCL"/>
</dbReference>
<dbReference type="GO" id="GO:0014069">
    <property type="term" value="C:postsynaptic density"/>
    <property type="evidence" value="ECO:0000314"/>
    <property type="project" value="SynGO"/>
</dbReference>
<dbReference type="GO" id="GO:0101031">
    <property type="term" value="C:protein folding chaperone complex"/>
    <property type="evidence" value="ECO:0007669"/>
    <property type="project" value="Ensembl"/>
</dbReference>
<dbReference type="GO" id="GO:0033596">
    <property type="term" value="C:TSC1-TSC2 complex"/>
    <property type="evidence" value="ECO:0000250"/>
    <property type="project" value="UniProtKB"/>
</dbReference>
<dbReference type="GO" id="GO:0042030">
    <property type="term" value="F:ATPase inhibitor activity"/>
    <property type="evidence" value="ECO:0000315"/>
    <property type="project" value="UniProtKB"/>
</dbReference>
<dbReference type="GO" id="GO:0030544">
    <property type="term" value="F:Hsp70 protein binding"/>
    <property type="evidence" value="ECO:0007669"/>
    <property type="project" value="Ensembl"/>
</dbReference>
<dbReference type="GO" id="GO:0051879">
    <property type="term" value="F:Hsp90 protein binding"/>
    <property type="evidence" value="ECO:0007669"/>
    <property type="project" value="Ensembl"/>
</dbReference>
<dbReference type="GO" id="GO:0044183">
    <property type="term" value="F:protein folding chaperone"/>
    <property type="evidence" value="ECO:0007669"/>
    <property type="project" value="Ensembl"/>
</dbReference>
<dbReference type="GO" id="GO:0002250">
    <property type="term" value="P:adaptive immune response"/>
    <property type="evidence" value="ECO:0000315"/>
    <property type="project" value="MGI"/>
</dbReference>
<dbReference type="GO" id="GO:0008344">
    <property type="term" value="P:adult locomotory behavior"/>
    <property type="evidence" value="ECO:0000250"/>
    <property type="project" value="ParkinsonsUK-UCL"/>
</dbReference>
<dbReference type="GO" id="GO:0008306">
    <property type="term" value="P:associative learning"/>
    <property type="evidence" value="ECO:0000315"/>
    <property type="project" value="MGI"/>
</dbReference>
<dbReference type="GO" id="GO:0055007">
    <property type="term" value="P:cardiac muscle cell differentiation"/>
    <property type="evidence" value="ECO:0000315"/>
    <property type="project" value="MGI"/>
</dbReference>
<dbReference type="GO" id="GO:0008283">
    <property type="term" value="P:cell population proliferation"/>
    <property type="evidence" value="ECO:0000315"/>
    <property type="project" value="MGI"/>
</dbReference>
<dbReference type="GO" id="GO:0030030">
    <property type="term" value="P:cell projection organization"/>
    <property type="evidence" value="ECO:0000315"/>
    <property type="project" value="MGI"/>
</dbReference>
<dbReference type="GO" id="GO:0007160">
    <property type="term" value="P:cell-matrix adhesion"/>
    <property type="evidence" value="ECO:0007669"/>
    <property type="project" value="Ensembl"/>
</dbReference>
<dbReference type="GO" id="GO:0036294">
    <property type="term" value="P:cellular response to decreased oxygen levels"/>
    <property type="evidence" value="ECO:0000250"/>
    <property type="project" value="ParkinsonsUK-UCL"/>
</dbReference>
<dbReference type="GO" id="GO:0009267">
    <property type="term" value="P:cellular response to starvation"/>
    <property type="evidence" value="ECO:0000250"/>
    <property type="project" value="UniProtKB"/>
</dbReference>
<dbReference type="GO" id="GO:0021987">
    <property type="term" value="P:cerebral cortex development"/>
    <property type="evidence" value="ECO:0000315"/>
    <property type="project" value="MGI"/>
</dbReference>
<dbReference type="GO" id="GO:0046323">
    <property type="term" value="P:D-glucose import"/>
    <property type="evidence" value="ECO:0000315"/>
    <property type="project" value="MGI"/>
</dbReference>
<dbReference type="GO" id="GO:0021766">
    <property type="term" value="P:hippocampus development"/>
    <property type="evidence" value="ECO:0000315"/>
    <property type="project" value="MGI"/>
</dbReference>
<dbReference type="GO" id="GO:0001822">
    <property type="term" value="P:kidney development"/>
    <property type="evidence" value="ECO:0000315"/>
    <property type="project" value="MGI"/>
</dbReference>
<dbReference type="GO" id="GO:0043379">
    <property type="term" value="P:memory T cell differentiation"/>
    <property type="evidence" value="ECO:0000315"/>
    <property type="project" value="MGI"/>
</dbReference>
<dbReference type="GO" id="GO:0042552">
    <property type="term" value="P:myelination"/>
    <property type="evidence" value="ECO:0000315"/>
    <property type="project" value="MGI"/>
</dbReference>
<dbReference type="GO" id="GO:0032780">
    <property type="term" value="P:negative regulation of ATP-dependent activity"/>
    <property type="evidence" value="ECO:0000315"/>
    <property type="project" value="UniProtKB"/>
</dbReference>
<dbReference type="GO" id="GO:0008285">
    <property type="term" value="P:negative regulation of cell population proliferation"/>
    <property type="evidence" value="ECO:0000315"/>
    <property type="project" value="MGI"/>
</dbReference>
<dbReference type="GO" id="GO:0045792">
    <property type="term" value="P:negative regulation of cell size"/>
    <property type="evidence" value="ECO:0000315"/>
    <property type="project" value="MGI"/>
</dbReference>
<dbReference type="GO" id="GO:0016242">
    <property type="term" value="P:negative regulation of macroautophagy"/>
    <property type="evidence" value="ECO:0000250"/>
    <property type="project" value="ParkinsonsUK-UCL"/>
</dbReference>
<dbReference type="GO" id="GO:0032007">
    <property type="term" value="P:negative regulation of TOR signaling"/>
    <property type="evidence" value="ECO:0000250"/>
    <property type="project" value="ParkinsonsUK-UCL"/>
</dbReference>
<dbReference type="GO" id="GO:1904262">
    <property type="term" value="P:negative regulation of TORC1 signaling"/>
    <property type="evidence" value="ECO:0000250"/>
    <property type="project" value="UniProtKB"/>
</dbReference>
<dbReference type="GO" id="GO:0007399">
    <property type="term" value="P:nervous system development"/>
    <property type="evidence" value="ECO:0000315"/>
    <property type="project" value="MGI"/>
</dbReference>
<dbReference type="GO" id="GO:0001843">
    <property type="term" value="P:neural tube closure"/>
    <property type="evidence" value="ECO:0000315"/>
    <property type="project" value="MGI"/>
</dbReference>
<dbReference type="GO" id="GO:0051894">
    <property type="term" value="P:positive regulation of focal adhesion assembly"/>
    <property type="evidence" value="ECO:0007669"/>
    <property type="project" value="Ensembl"/>
</dbReference>
<dbReference type="GO" id="GO:0006813">
    <property type="term" value="P:potassium ion transport"/>
    <property type="evidence" value="ECO:0000315"/>
    <property type="project" value="MGI"/>
</dbReference>
<dbReference type="GO" id="GO:0050821">
    <property type="term" value="P:protein stabilization"/>
    <property type="evidence" value="ECO:0000315"/>
    <property type="project" value="UniProtKB"/>
</dbReference>
<dbReference type="GO" id="GO:0051492">
    <property type="term" value="P:regulation of stress fiber assembly"/>
    <property type="evidence" value="ECO:0007669"/>
    <property type="project" value="Ensembl"/>
</dbReference>
<dbReference type="GO" id="GO:0032868">
    <property type="term" value="P:response to insulin"/>
    <property type="evidence" value="ECO:0007669"/>
    <property type="project" value="Ensembl"/>
</dbReference>
<dbReference type="GO" id="GO:0050808">
    <property type="term" value="P:synapse organization"/>
    <property type="evidence" value="ECO:0000315"/>
    <property type="project" value="MGI"/>
</dbReference>
<dbReference type="InterPro" id="IPR016024">
    <property type="entry name" value="ARM-type_fold"/>
</dbReference>
<dbReference type="InterPro" id="IPR007483">
    <property type="entry name" value="Hamartin"/>
</dbReference>
<dbReference type="PANTHER" id="PTHR15154">
    <property type="entry name" value="HAMARTIN"/>
    <property type="match status" value="1"/>
</dbReference>
<dbReference type="PANTHER" id="PTHR15154:SF2">
    <property type="entry name" value="HAMARTIN"/>
    <property type="match status" value="1"/>
</dbReference>
<dbReference type="Pfam" id="PF04388">
    <property type="entry name" value="Hamartin"/>
    <property type="match status" value="1"/>
</dbReference>
<dbReference type="SUPFAM" id="SSF48371">
    <property type="entry name" value="ARM repeat"/>
    <property type="match status" value="1"/>
</dbReference>
<accession>Q9EP53</accession>
<accession>A2AHW1</accession>
<accession>Q3UHF2</accession>
<accession>Q7TS92</accession>
<accession>Q80U55</accession>
<accession>Q924U7</accession>
<keyword id="KW-0025">Alternative splicing</keyword>
<keyword id="KW-0143">Chaperone</keyword>
<keyword id="KW-0175">Coiled coil</keyword>
<keyword id="KW-0963">Cytoplasm</keyword>
<keyword id="KW-1017">Isopeptide bond</keyword>
<keyword id="KW-0458">Lysosome</keyword>
<keyword id="KW-0472">Membrane</keyword>
<keyword id="KW-0597">Phosphoprotein</keyword>
<keyword id="KW-1185">Reference proteome</keyword>
<keyword id="KW-0043">Tumor suppressor</keyword>
<keyword id="KW-0832">Ubl conjugation</keyword>
<gene>
    <name evidence="7 13" type="primary">Tsc1</name>
    <name evidence="9" type="synonym">Kiaa0243</name>
</gene>
<protein>
    <recommendedName>
        <fullName evidence="12">Hamartin</fullName>
    </recommendedName>
    <alternativeName>
        <fullName evidence="7">Tuberous sclerosis 1 protein homolog</fullName>
    </alternativeName>
</protein>
<sequence length="1161" mass="128746">MAQLANIGELLSMLDSSTLGVRDDVTAIFKESLNSERGPMLVNTLVDYYLETNSQPVLHILTTLQEPHDKHLLDKINEYVGKAATRLSILSLLGHVVRLQPSWKHKLSQAPLLPSLLKCLKMDTDVVVLTTGVLVLITMLPMIPQSGKQHLLDFFDIFGRLSSWCLKKPGHVTEVYLVHLHASVYALFHRLYGMYPCNFVSFLRSHYSMKENVETFEEVVKPMMEHVRIHPELVTGSKDHELDPRRWKTLETHDVVIECAKISLDPTEASYEDGYSVSHQLSACFPYRSADVTTSPYVDTQNSYGGSTSTPSSSSRLMLFSPPGQLPQSLSSPSTRLLPEPLQASLWSPSAVCGMTTPPTSPGNVPADLSHPYSKAFGTTAGGKGTPSGTPATSPPPAPPCPQDDCVHGSAAQASATAPRKEERADSSRPYLHRQSNDRGLEDPPGSKGSVTLRNLPDFLGDLASEEDSIEKDKEEAAISKELSEITTAEADPVVPRGGFDSPFYRDSLSGSQRKTHSAASGTQGSSVNPEPLHSSLDKHGPDTPKQAFTPIDPPSGSADVSPAGDRDRQTSLETSILTPSPCKIPPQRGVSFGSGQLPPYDHLFEVALPKTACHFVSKKTEELLKKVKGNPEEDCVPSTSPMEVLDRLIEQGAGAHSKELSRLSLPSKSVDWTHFGGSPPSDELRTLRDQLLLLHNQLLYERFKRQQHALRNRRLLRKVIRAAALEEHNAAMKDQLKLQEKDIQMWKVSLQKEQARYSQLQEQRDTMVTQLHSQIRQLQHDREEFYNQSQELQTKLEDCRNMIAELRVELKKANNKVCHTELLLSQVSQKLSNSESVQQQMEFLNRQLLVLGEVNELYLEQLQSKHPDTTKEVEMMKTAYRKELEKNRSHLLQQNQRLDASQRRVLELESLLAKKDHLLLEQKKYLEDVKSQASGQLLAAESRYEAQRKITRVLELEILDLYGRLEKDGRLRKLEEDRAEAAEAAEERLDCCSDGCTDSLVGHNEEASGHNGETRTSRPGGTRASCGGRVTGGSSSSSSELSTPEKPPSQRFSSRWEPALGEPSSSIPTTVGSLPSSKSFLGMKARELFRNKSESQCDEDSVTMSSSSLSETLKTELGKDSGTENKTSLSLDAPHPSSPNSDNVGQLHIMDYNETHPEHS</sequence>
<proteinExistence type="evidence at protein level"/>
<name>TSC1_MOUSE</name>
<evidence type="ECO:0000250" key="1">
    <source>
        <dbReference type="UniProtKB" id="Q92574"/>
    </source>
</evidence>
<evidence type="ECO:0000255" key="2"/>
<evidence type="ECO:0000256" key="3">
    <source>
        <dbReference type="SAM" id="MobiDB-lite"/>
    </source>
</evidence>
<evidence type="ECO:0000269" key="4">
    <source>
    </source>
</evidence>
<evidence type="ECO:0000269" key="5">
    <source>
    </source>
</evidence>
<evidence type="ECO:0000269" key="6">
    <source>
    </source>
</evidence>
<evidence type="ECO:0000303" key="7">
    <source>
    </source>
</evidence>
<evidence type="ECO:0000303" key="8">
    <source>
    </source>
</evidence>
<evidence type="ECO:0000303" key="9">
    <source>
    </source>
</evidence>
<evidence type="ECO:0000303" key="10">
    <source>
    </source>
</evidence>
<evidence type="ECO:0000303" key="11">
    <source>
    </source>
</evidence>
<evidence type="ECO:0000305" key="12"/>
<evidence type="ECO:0000312" key="13">
    <source>
        <dbReference type="MGI" id="MGI:1929183"/>
    </source>
</evidence>
<evidence type="ECO:0007744" key="14">
    <source>
    </source>
</evidence>
<feature type="chain" id="PRO_0000379922" description="Hamartin">
    <location>
        <begin position="1"/>
        <end position="1161"/>
    </location>
</feature>
<feature type="region of interest" description="Disordered" evidence="3">
    <location>
        <begin position="296"/>
        <end position="336"/>
    </location>
</feature>
<feature type="region of interest" description="Disordered" evidence="3">
    <location>
        <begin position="353"/>
        <end position="591"/>
    </location>
</feature>
<feature type="region of interest" description="Mediates interaction with WDR45B" evidence="1">
    <location>
        <begin position="403"/>
        <end position="784"/>
    </location>
</feature>
<feature type="region of interest" description="Disordered" evidence="3">
    <location>
        <begin position="1003"/>
        <end position="1077"/>
    </location>
</feature>
<feature type="region of interest" description="Disordered" evidence="3">
    <location>
        <begin position="1092"/>
        <end position="1161"/>
    </location>
</feature>
<feature type="coiled-coil region" evidence="2">
    <location>
        <begin position="721"/>
        <end position="849"/>
    </location>
</feature>
<feature type="coiled-coil region" evidence="2">
    <location>
        <begin position="879"/>
        <end position="917"/>
    </location>
</feature>
<feature type="coiled-coil region" evidence="2">
    <location>
        <begin position="967"/>
        <end position="991"/>
    </location>
</feature>
<feature type="compositionally biased region" description="Low complexity" evidence="3">
    <location>
        <begin position="303"/>
        <end position="336"/>
    </location>
</feature>
<feature type="compositionally biased region" description="Pro residues" evidence="3">
    <location>
        <begin position="393"/>
        <end position="402"/>
    </location>
</feature>
<feature type="compositionally biased region" description="Basic and acidic residues" evidence="3">
    <location>
        <begin position="471"/>
        <end position="484"/>
    </location>
</feature>
<feature type="compositionally biased region" description="Polar residues" evidence="3">
    <location>
        <begin position="509"/>
        <end position="529"/>
    </location>
</feature>
<feature type="compositionally biased region" description="Basic and acidic residues" evidence="3">
    <location>
        <begin position="1004"/>
        <end position="1017"/>
    </location>
</feature>
<feature type="compositionally biased region" description="Low complexity" evidence="3">
    <location>
        <begin position="1026"/>
        <end position="1043"/>
    </location>
</feature>
<feature type="compositionally biased region" description="Polar residues" evidence="3">
    <location>
        <begin position="1064"/>
        <end position="1077"/>
    </location>
</feature>
<feature type="compositionally biased region" description="Low complexity" evidence="3">
    <location>
        <begin position="1103"/>
        <end position="1113"/>
    </location>
</feature>
<feature type="compositionally biased region" description="Basic and acidic residues" evidence="3">
    <location>
        <begin position="1114"/>
        <end position="1124"/>
    </location>
</feature>
<feature type="compositionally biased region" description="Basic and acidic residues" evidence="3">
    <location>
        <begin position="1152"/>
        <end position="1161"/>
    </location>
</feature>
<feature type="modified residue" description="Phosphoserine" evidence="1">
    <location>
        <position position="484"/>
    </location>
</feature>
<feature type="modified residue" description="Phosphoserine" evidence="14">
    <location>
        <position position="502"/>
    </location>
</feature>
<feature type="modified residue" description="Phosphoserine" evidence="1">
    <location>
        <position position="508"/>
    </location>
</feature>
<feature type="modified residue" description="Phosphoserine" evidence="1">
    <location>
        <position position="518"/>
    </location>
</feature>
<feature type="modified residue" description="Phosphoserine" evidence="14">
    <location>
        <position position="592"/>
    </location>
</feature>
<feature type="modified residue" description="Phosphoserine" evidence="1">
    <location>
        <position position="595"/>
    </location>
</feature>
<feature type="modified residue" description="Phosphoserine" evidence="1">
    <location>
        <position position="1094"/>
    </location>
</feature>
<feature type="cross-link" description="Glycyl lysine isopeptide (Lys-Gly) (interchain with G-Cter in ubiquitin)" evidence="1">
    <location>
        <position position="30"/>
    </location>
</feature>
<feature type="splice variant" id="VSP_037747" description="In isoform 2, isoform 3 and isoform 4." evidence="8 9 10 11">
    <location>
        <position position="381"/>
    </location>
</feature>
<feature type="splice variant" id="VSP_037748" description="In isoform 3." evidence="9 11">
    <location>
        <begin position="678"/>
        <end position="682"/>
    </location>
</feature>
<feature type="splice variant" id="VSP_037749" description="In isoform 4." evidence="10">
    <location>
        <begin position="1056"/>
        <end position="1067"/>
    </location>
</feature>
<reference key="1">
    <citation type="journal article" date="2000" name="Mamm. Genome">
        <title>Genomic organization and comparative analysis of the mouse tuberous sclerosis 1 (Tsc1) locus.</title>
        <authorList>
            <person name="Cheadle J.P."/>
            <person name="Dobbie L."/>
            <person name="Idziaszczyk S."/>
            <person name="Hodges A.K."/>
            <person name="Smith A.J.H."/>
            <person name="Sampson J.R."/>
            <person name="Young J.M."/>
        </authorList>
    </citation>
    <scope>NUCLEOTIDE SEQUENCE [GENOMIC DNA / MRNA] (ISOFORM 1)</scope>
</reference>
<reference key="2">
    <citation type="journal article" date="2001" name="Proc. Natl. Acad. Sci. U.S.A.">
        <title>A germ-line Tsc1 mutation causes tumor development and embryonic lethality that are similar, but not identical to, those caused by Tsc2 mutation in mice.</title>
        <authorList>
            <person name="Kobayashi T."/>
            <person name="Minowa O."/>
            <person name="Sugitani Y."/>
            <person name="Takai S."/>
            <person name="Mitani H."/>
            <person name="Kobayashi E."/>
            <person name="Noda T."/>
            <person name="Hino O."/>
        </authorList>
    </citation>
    <scope>NUCLEOTIDE SEQUENCE [MRNA] (ISOFORM 2)</scope>
    <source>
        <strain>129/Sv</strain>
    </source>
</reference>
<reference key="3">
    <citation type="journal article" date="2005" name="Science">
        <title>The transcriptional landscape of the mammalian genome.</title>
        <authorList>
            <person name="Carninci P."/>
            <person name="Kasukawa T."/>
            <person name="Katayama S."/>
            <person name="Gough J."/>
            <person name="Frith M.C."/>
            <person name="Maeda N."/>
            <person name="Oyama R."/>
            <person name="Ravasi T."/>
            <person name="Lenhard B."/>
            <person name="Wells C."/>
            <person name="Kodzius R."/>
            <person name="Shimokawa K."/>
            <person name="Bajic V.B."/>
            <person name="Brenner S.E."/>
            <person name="Batalov S."/>
            <person name="Forrest A.R."/>
            <person name="Zavolan M."/>
            <person name="Davis M.J."/>
            <person name="Wilming L.G."/>
            <person name="Aidinis V."/>
            <person name="Allen J.E."/>
            <person name="Ambesi-Impiombato A."/>
            <person name="Apweiler R."/>
            <person name="Aturaliya R.N."/>
            <person name="Bailey T.L."/>
            <person name="Bansal M."/>
            <person name="Baxter L."/>
            <person name="Beisel K.W."/>
            <person name="Bersano T."/>
            <person name="Bono H."/>
            <person name="Chalk A.M."/>
            <person name="Chiu K.P."/>
            <person name="Choudhary V."/>
            <person name="Christoffels A."/>
            <person name="Clutterbuck D.R."/>
            <person name="Crowe M.L."/>
            <person name="Dalla E."/>
            <person name="Dalrymple B.P."/>
            <person name="de Bono B."/>
            <person name="Della Gatta G."/>
            <person name="di Bernardo D."/>
            <person name="Down T."/>
            <person name="Engstrom P."/>
            <person name="Fagiolini M."/>
            <person name="Faulkner G."/>
            <person name="Fletcher C.F."/>
            <person name="Fukushima T."/>
            <person name="Furuno M."/>
            <person name="Futaki S."/>
            <person name="Gariboldi M."/>
            <person name="Georgii-Hemming P."/>
            <person name="Gingeras T.R."/>
            <person name="Gojobori T."/>
            <person name="Green R.E."/>
            <person name="Gustincich S."/>
            <person name="Harbers M."/>
            <person name="Hayashi Y."/>
            <person name="Hensch T.K."/>
            <person name="Hirokawa N."/>
            <person name="Hill D."/>
            <person name="Huminiecki L."/>
            <person name="Iacono M."/>
            <person name="Ikeo K."/>
            <person name="Iwama A."/>
            <person name="Ishikawa T."/>
            <person name="Jakt M."/>
            <person name="Kanapin A."/>
            <person name="Katoh M."/>
            <person name="Kawasawa Y."/>
            <person name="Kelso J."/>
            <person name="Kitamura H."/>
            <person name="Kitano H."/>
            <person name="Kollias G."/>
            <person name="Krishnan S.P."/>
            <person name="Kruger A."/>
            <person name="Kummerfeld S.K."/>
            <person name="Kurochkin I.V."/>
            <person name="Lareau L.F."/>
            <person name="Lazarevic D."/>
            <person name="Lipovich L."/>
            <person name="Liu J."/>
            <person name="Liuni S."/>
            <person name="McWilliam S."/>
            <person name="Madan Babu M."/>
            <person name="Madera M."/>
            <person name="Marchionni L."/>
            <person name="Matsuda H."/>
            <person name="Matsuzawa S."/>
            <person name="Miki H."/>
            <person name="Mignone F."/>
            <person name="Miyake S."/>
            <person name="Morris K."/>
            <person name="Mottagui-Tabar S."/>
            <person name="Mulder N."/>
            <person name="Nakano N."/>
            <person name="Nakauchi H."/>
            <person name="Ng P."/>
            <person name="Nilsson R."/>
            <person name="Nishiguchi S."/>
            <person name="Nishikawa S."/>
            <person name="Nori F."/>
            <person name="Ohara O."/>
            <person name="Okazaki Y."/>
            <person name="Orlando V."/>
            <person name="Pang K.C."/>
            <person name="Pavan W.J."/>
            <person name="Pavesi G."/>
            <person name="Pesole G."/>
            <person name="Petrovsky N."/>
            <person name="Piazza S."/>
            <person name="Reed J."/>
            <person name="Reid J.F."/>
            <person name="Ring B.Z."/>
            <person name="Ringwald M."/>
            <person name="Rost B."/>
            <person name="Ruan Y."/>
            <person name="Salzberg S.L."/>
            <person name="Sandelin A."/>
            <person name="Schneider C."/>
            <person name="Schoenbach C."/>
            <person name="Sekiguchi K."/>
            <person name="Semple C.A."/>
            <person name="Seno S."/>
            <person name="Sessa L."/>
            <person name="Sheng Y."/>
            <person name="Shibata Y."/>
            <person name="Shimada H."/>
            <person name="Shimada K."/>
            <person name="Silva D."/>
            <person name="Sinclair B."/>
            <person name="Sperling S."/>
            <person name="Stupka E."/>
            <person name="Sugiura K."/>
            <person name="Sultana R."/>
            <person name="Takenaka Y."/>
            <person name="Taki K."/>
            <person name="Tammoja K."/>
            <person name="Tan S.L."/>
            <person name="Tang S."/>
            <person name="Taylor M.S."/>
            <person name="Tegner J."/>
            <person name="Teichmann S.A."/>
            <person name="Ueda H.R."/>
            <person name="van Nimwegen E."/>
            <person name="Verardo R."/>
            <person name="Wei C.L."/>
            <person name="Yagi K."/>
            <person name="Yamanishi H."/>
            <person name="Zabarovsky E."/>
            <person name="Zhu S."/>
            <person name="Zimmer A."/>
            <person name="Hide W."/>
            <person name="Bult C."/>
            <person name="Grimmond S.M."/>
            <person name="Teasdale R.D."/>
            <person name="Liu E.T."/>
            <person name="Brusic V."/>
            <person name="Quackenbush J."/>
            <person name="Wahlestedt C."/>
            <person name="Mattick J.S."/>
            <person name="Hume D.A."/>
            <person name="Kai C."/>
            <person name="Sasaki D."/>
            <person name="Tomaru Y."/>
            <person name="Fukuda S."/>
            <person name="Kanamori-Katayama M."/>
            <person name="Suzuki M."/>
            <person name="Aoki J."/>
            <person name="Arakawa T."/>
            <person name="Iida J."/>
            <person name="Imamura K."/>
            <person name="Itoh M."/>
            <person name="Kato T."/>
            <person name="Kawaji H."/>
            <person name="Kawagashira N."/>
            <person name="Kawashima T."/>
            <person name="Kojima M."/>
            <person name="Kondo S."/>
            <person name="Konno H."/>
            <person name="Nakano K."/>
            <person name="Ninomiya N."/>
            <person name="Nishio T."/>
            <person name="Okada M."/>
            <person name="Plessy C."/>
            <person name="Shibata K."/>
            <person name="Shiraki T."/>
            <person name="Suzuki S."/>
            <person name="Tagami M."/>
            <person name="Waki K."/>
            <person name="Watahiki A."/>
            <person name="Okamura-Oho Y."/>
            <person name="Suzuki H."/>
            <person name="Kawai J."/>
            <person name="Hayashizaki Y."/>
        </authorList>
    </citation>
    <scope>NUCLEOTIDE SEQUENCE [LARGE SCALE MRNA] (ISOFORM 3)</scope>
</reference>
<reference key="4">
    <citation type="journal article" date="2009" name="PLoS Biol.">
        <title>Lineage-specific biology revealed by a finished genome assembly of the mouse.</title>
        <authorList>
            <person name="Church D.M."/>
            <person name="Goodstadt L."/>
            <person name="Hillier L.W."/>
            <person name="Zody M.C."/>
            <person name="Goldstein S."/>
            <person name="She X."/>
            <person name="Bult C.J."/>
            <person name="Agarwala R."/>
            <person name="Cherry J.L."/>
            <person name="DiCuccio M."/>
            <person name="Hlavina W."/>
            <person name="Kapustin Y."/>
            <person name="Meric P."/>
            <person name="Maglott D."/>
            <person name="Birtle Z."/>
            <person name="Marques A.C."/>
            <person name="Graves T."/>
            <person name="Zhou S."/>
            <person name="Teague B."/>
            <person name="Potamousis K."/>
            <person name="Churas C."/>
            <person name="Place M."/>
            <person name="Herschleb J."/>
            <person name="Runnheim R."/>
            <person name="Forrest D."/>
            <person name="Amos-Landgraf J."/>
            <person name="Schwartz D.C."/>
            <person name="Cheng Z."/>
            <person name="Lindblad-Toh K."/>
            <person name="Eichler E.E."/>
            <person name="Ponting C.P."/>
        </authorList>
    </citation>
    <scope>NUCLEOTIDE SEQUENCE [LARGE SCALE GENOMIC DNA]</scope>
    <source>
        <strain>C57BL/6J</strain>
    </source>
</reference>
<reference key="5">
    <citation type="submission" date="2005-07" db="EMBL/GenBank/DDBJ databases">
        <authorList>
            <person name="Mural R.J."/>
            <person name="Adams M.D."/>
            <person name="Myers E.W."/>
            <person name="Smith H.O."/>
            <person name="Venter J.C."/>
        </authorList>
    </citation>
    <scope>NUCLEOTIDE SEQUENCE [LARGE SCALE GENOMIC DNA]</scope>
</reference>
<reference key="6">
    <citation type="journal article" date="2004" name="Genome Res.">
        <title>The status, quality, and expansion of the NIH full-length cDNA project: the Mammalian Gene Collection (MGC).</title>
        <authorList>
            <consortium name="The MGC Project Team"/>
        </authorList>
    </citation>
    <scope>NUCLEOTIDE SEQUENCE [LARGE SCALE MRNA] (ISOFORM 4)</scope>
    <source>
        <strain>C57BL/6J</strain>
        <tissue>Brain</tissue>
    </source>
</reference>
<reference key="7">
    <citation type="journal article" date="2003" name="DNA Res.">
        <title>Prediction of the coding sequences of mouse homologues of KIAA gene: II. The complete nucleotide sequences of 400 mouse KIAA-homologous cDNAs identified by screening of terminal sequences of cDNA clones randomly sampled from size-fractionated libraries.</title>
        <authorList>
            <person name="Okazaki N."/>
            <person name="Kikuno R."/>
            <person name="Ohara R."/>
            <person name="Inamoto S."/>
            <person name="Aizawa H."/>
            <person name="Yuasa S."/>
            <person name="Nakajima D."/>
            <person name="Nagase T."/>
            <person name="Ohara O."/>
            <person name="Koga H."/>
        </authorList>
    </citation>
    <scope>NUCLEOTIDE SEQUENCE [LARGE SCALE MRNA] OF 489-1161 (ISOFORM 3)</scope>
    <source>
        <tissue>Brain</tissue>
    </source>
</reference>
<reference key="8">
    <citation type="journal article" date="2003" name="Mol. Cell">
        <title>Insulin activation of Rheb, a mediator of mTOR/S6K/4E-BP signaling, is inhibited by TSC1 and 2.</title>
        <authorList>
            <person name="Garami A."/>
            <person name="Zwartkruis F.J."/>
            <person name="Nobukuni T."/>
            <person name="Joaquin M."/>
            <person name="Roccio M."/>
            <person name="Stocker H."/>
            <person name="Kozma S.C."/>
            <person name="Hafen E."/>
            <person name="Bos J.L."/>
            <person name="Thomas G."/>
        </authorList>
    </citation>
    <scope>FUNCTION</scope>
</reference>
<reference key="9">
    <citation type="journal article" date="2006" name="Cancer Res.">
        <title>Regulation of microtubule-dependent protein transport by the TSC2/mammalian target of rapamycin pathway.</title>
        <authorList>
            <person name="Jiang X."/>
            <person name="Yeung R.S."/>
        </authorList>
    </citation>
    <scope>FUNCTION</scope>
</reference>
<reference key="10">
    <citation type="journal article" date="2010" name="Cell">
        <title>A tissue-specific atlas of mouse protein phosphorylation and expression.</title>
        <authorList>
            <person name="Huttlin E.L."/>
            <person name="Jedrychowski M.P."/>
            <person name="Elias J.E."/>
            <person name="Goswami T."/>
            <person name="Rad R."/>
            <person name="Beausoleil S.A."/>
            <person name="Villen J."/>
            <person name="Haas W."/>
            <person name="Sowa M.E."/>
            <person name="Gygi S.P."/>
        </authorList>
    </citation>
    <scope>PHOSPHORYLATION [LARGE SCALE ANALYSIS] AT SER-502 AND SER-592</scope>
    <scope>IDENTIFICATION BY MASS SPECTROMETRY [LARGE SCALE ANALYSIS]</scope>
    <source>
        <tissue>Brain</tissue>
        <tissue>Brown adipose tissue</tissue>
        <tissue>Heart</tissue>
        <tissue>Kidney</tissue>
        <tissue>Liver</tissue>
        <tissue>Lung</tissue>
        <tissue>Spleen</tissue>
        <tissue>Testis</tissue>
    </source>
</reference>
<reference key="11">
    <citation type="journal article" date="2017" name="EMBO J.">
        <title>Tumor suppressor Tsc1 is a new Hsp90 co-chaperone that facilitates folding of kinase and non-kinase clients.</title>
        <authorList>
            <person name="Woodford M.R."/>
            <person name="Sager R.A."/>
            <person name="Marris E."/>
            <person name="Dunn D.M."/>
            <person name="Blanden A.R."/>
            <person name="Murphy R.L."/>
            <person name="Rensing N."/>
            <person name="Shapiro O."/>
            <person name="Panaretou B."/>
            <person name="Prodromou C."/>
            <person name="Loh S.N."/>
            <person name="Gutmann D.H."/>
            <person name="Bourboulia D."/>
            <person name="Bratslavsky G."/>
            <person name="Wong M."/>
            <person name="Mollapour M."/>
        </authorList>
    </citation>
    <scope>FUNCTION</scope>
    <scope>INTERACTION WITH HSP90AA1</scope>
    <scope>DISRUPTION PHENOTYPE</scope>
</reference>